<accession>Q31WH4</accession>
<protein>
    <recommendedName>
        <fullName evidence="1">Ribose-5-phosphate isomerase A</fullName>
        <ecNumber evidence="1">5.3.1.6</ecNumber>
    </recommendedName>
    <alternativeName>
        <fullName evidence="1">Phosphoriboisomerase A</fullName>
        <shortName evidence="1">PRI</shortName>
    </alternativeName>
</protein>
<feature type="chain" id="PRO_1000016997" description="Ribose-5-phosphate isomerase A">
    <location>
        <begin position="1"/>
        <end position="219"/>
    </location>
</feature>
<feature type="active site" description="Proton acceptor" evidence="1">
    <location>
        <position position="103"/>
    </location>
</feature>
<feature type="binding site" evidence="1">
    <location>
        <begin position="28"/>
        <end position="31"/>
    </location>
    <ligand>
        <name>substrate</name>
    </ligand>
</feature>
<feature type="binding site" evidence="1">
    <location>
        <begin position="81"/>
        <end position="84"/>
    </location>
    <ligand>
        <name>substrate</name>
    </ligand>
</feature>
<feature type="binding site" evidence="1">
    <location>
        <begin position="94"/>
        <end position="97"/>
    </location>
    <ligand>
        <name>substrate</name>
    </ligand>
</feature>
<feature type="binding site" evidence="1">
    <location>
        <position position="121"/>
    </location>
    <ligand>
        <name>substrate</name>
    </ligand>
</feature>
<gene>
    <name evidence="1" type="primary">rpiA</name>
    <name type="ordered locus">SBO_3079</name>
</gene>
<organism>
    <name type="scientific">Shigella boydii serotype 4 (strain Sb227)</name>
    <dbReference type="NCBI Taxonomy" id="300268"/>
    <lineage>
        <taxon>Bacteria</taxon>
        <taxon>Pseudomonadati</taxon>
        <taxon>Pseudomonadota</taxon>
        <taxon>Gammaproteobacteria</taxon>
        <taxon>Enterobacterales</taxon>
        <taxon>Enterobacteriaceae</taxon>
        <taxon>Shigella</taxon>
    </lineage>
</organism>
<sequence length="219" mass="22860">MTQDELKKAVGWAALQYVQPGTIVGVGTGSTAAHFIDALGTMKGQIEGAVSSSDASTEKLKSLGIHVFDLNEVDSLGIYVDGADEINGHMQMIKGGGAALTREKIIASVAEKFICIADASKQVDILGKFPLPVEVIPMARSAVARQLVKLGGRPEYRQGVVTDNGNVILDVHGMEILDPIAMENAINAIPGVVTVGLFANRGADVALIGTPDGVKTIVK</sequence>
<name>RPIA_SHIBS</name>
<dbReference type="EC" id="5.3.1.6" evidence="1"/>
<dbReference type="EMBL" id="CP000036">
    <property type="protein sequence ID" value="ABB67584.1"/>
    <property type="molecule type" value="Genomic_DNA"/>
</dbReference>
<dbReference type="RefSeq" id="WP_000189743.1">
    <property type="nucleotide sequence ID" value="NC_007613.1"/>
</dbReference>
<dbReference type="SMR" id="Q31WH4"/>
<dbReference type="GeneID" id="93779085"/>
<dbReference type="KEGG" id="sbo:SBO_3079"/>
<dbReference type="HOGENOM" id="CLU_056590_1_1_6"/>
<dbReference type="UniPathway" id="UPA00115">
    <property type="reaction ID" value="UER00412"/>
</dbReference>
<dbReference type="Proteomes" id="UP000007067">
    <property type="component" value="Chromosome"/>
</dbReference>
<dbReference type="GO" id="GO:0005829">
    <property type="term" value="C:cytosol"/>
    <property type="evidence" value="ECO:0007669"/>
    <property type="project" value="TreeGrafter"/>
</dbReference>
<dbReference type="GO" id="GO:0004751">
    <property type="term" value="F:ribose-5-phosphate isomerase activity"/>
    <property type="evidence" value="ECO:0007669"/>
    <property type="project" value="UniProtKB-UniRule"/>
</dbReference>
<dbReference type="GO" id="GO:0006014">
    <property type="term" value="P:D-ribose metabolic process"/>
    <property type="evidence" value="ECO:0007669"/>
    <property type="project" value="TreeGrafter"/>
</dbReference>
<dbReference type="GO" id="GO:0009052">
    <property type="term" value="P:pentose-phosphate shunt, non-oxidative branch"/>
    <property type="evidence" value="ECO:0007669"/>
    <property type="project" value="UniProtKB-UniRule"/>
</dbReference>
<dbReference type="CDD" id="cd01398">
    <property type="entry name" value="RPI_A"/>
    <property type="match status" value="1"/>
</dbReference>
<dbReference type="FunFam" id="3.30.70.260:FF:000004">
    <property type="entry name" value="Ribose-5-phosphate isomerase A"/>
    <property type="match status" value="1"/>
</dbReference>
<dbReference type="FunFam" id="3.40.50.1360:FF:000001">
    <property type="entry name" value="Ribose-5-phosphate isomerase A"/>
    <property type="match status" value="1"/>
</dbReference>
<dbReference type="Gene3D" id="3.30.70.260">
    <property type="match status" value="1"/>
</dbReference>
<dbReference type="Gene3D" id="3.40.50.1360">
    <property type="match status" value="1"/>
</dbReference>
<dbReference type="HAMAP" id="MF_00170">
    <property type="entry name" value="Rib_5P_isom_A"/>
    <property type="match status" value="1"/>
</dbReference>
<dbReference type="InterPro" id="IPR037171">
    <property type="entry name" value="NagB/RpiA_transferase-like"/>
</dbReference>
<dbReference type="InterPro" id="IPR020672">
    <property type="entry name" value="Ribose5P_isomerase_typA_subgr"/>
</dbReference>
<dbReference type="InterPro" id="IPR004788">
    <property type="entry name" value="Ribose5P_isomerase_type_A"/>
</dbReference>
<dbReference type="NCBIfam" id="NF001924">
    <property type="entry name" value="PRK00702.1"/>
    <property type="match status" value="1"/>
</dbReference>
<dbReference type="NCBIfam" id="TIGR00021">
    <property type="entry name" value="rpiA"/>
    <property type="match status" value="1"/>
</dbReference>
<dbReference type="PANTHER" id="PTHR11934">
    <property type="entry name" value="RIBOSE-5-PHOSPHATE ISOMERASE"/>
    <property type="match status" value="1"/>
</dbReference>
<dbReference type="PANTHER" id="PTHR11934:SF0">
    <property type="entry name" value="RIBOSE-5-PHOSPHATE ISOMERASE"/>
    <property type="match status" value="1"/>
</dbReference>
<dbReference type="Pfam" id="PF06026">
    <property type="entry name" value="Rib_5-P_isom_A"/>
    <property type="match status" value="1"/>
</dbReference>
<dbReference type="SUPFAM" id="SSF75445">
    <property type="entry name" value="D-ribose-5-phosphate isomerase (RpiA), lid domain"/>
    <property type="match status" value="1"/>
</dbReference>
<dbReference type="SUPFAM" id="SSF100950">
    <property type="entry name" value="NagB/RpiA/CoA transferase-like"/>
    <property type="match status" value="1"/>
</dbReference>
<keyword id="KW-0413">Isomerase</keyword>
<evidence type="ECO:0000255" key="1">
    <source>
        <dbReference type="HAMAP-Rule" id="MF_00170"/>
    </source>
</evidence>
<proteinExistence type="inferred from homology"/>
<reference key="1">
    <citation type="journal article" date="2005" name="Nucleic Acids Res.">
        <title>Genome dynamics and diversity of Shigella species, the etiologic agents of bacillary dysentery.</title>
        <authorList>
            <person name="Yang F."/>
            <person name="Yang J."/>
            <person name="Zhang X."/>
            <person name="Chen L."/>
            <person name="Jiang Y."/>
            <person name="Yan Y."/>
            <person name="Tang X."/>
            <person name="Wang J."/>
            <person name="Xiong Z."/>
            <person name="Dong J."/>
            <person name="Xue Y."/>
            <person name="Zhu Y."/>
            <person name="Xu X."/>
            <person name="Sun L."/>
            <person name="Chen S."/>
            <person name="Nie H."/>
            <person name="Peng J."/>
            <person name="Xu J."/>
            <person name="Wang Y."/>
            <person name="Yuan Z."/>
            <person name="Wen Y."/>
            <person name="Yao Z."/>
            <person name="Shen Y."/>
            <person name="Qiang B."/>
            <person name="Hou Y."/>
            <person name="Yu J."/>
            <person name="Jin Q."/>
        </authorList>
    </citation>
    <scope>NUCLEOTIDE SEQUENCE [LARGE SCALE GENOMIC DNA]</scope>
    <source>
        <strain>Sb227</strain>
    </source>
</reference>
<comment type="function">
    <text evidence="1">Catalyzes the reversible conversion of ribose-5-phosphate to ribulose 5-phosphate.</text>
</comment>
<comment type="catalytic activity">
    <reaction evidence="1">
        <text>aldehydo-D-ribose 5-phosphate = D-ribulose 5-phosphate</text>
        <dbReference type="Rhea" id="RHEA:14657"/>
        <dbReference type="ChEBI" id="CHEBI:58121"/>
        <dbReference type="ChEBI" id="CHEBI:58273"/>
        <dbReference type="EC" id="5.3.1.6"/>
    </reaction>
</comment>
<comment type="pathway">
    <text evidence="1">Carbohydrate degradation; pentose phosphate pathway; D-ribose 5-phosphate from D-ribulose 5-phosphate (non-oxidative stage): step 1/1.</text>
</comment>
<comment type="subunit">
    <text evidence="1">Homodimer.</text>
</comment>
<comment type="similarity">
    <text evidence="1">Belongs to the ribose 5-phosphate isomerase family.</text>
</comment>